<name>COWN_RHORT</name>
<organism>
    <name type="scientific">Rhodospirillum rubrum (strain ATCC 11170 / ATH 1.1.1 / DSM 467 / LMG 4362 / NCIMB 8255 / S1)</name>
    <dbReference type="NCBI Taxonomy" id="269796"/>
    <lineage>
        <taxon>Bacteria</taxon>
        <taxon>Pseudomonadati</taxon>
        <taxon>Pseudomonadota</taxon>
        <taxon>Alphaproteobacteria</taxon>
        <taxon>Rhodospirillales</taxon>
        <taxon>Rhodospirillaceae</taxon>
        <taxon>Rhodospirillum</taxon>
    </lineage>
</organism>
<sequence>MTMDGPAHMPRRYVTFQGVNVEGLSQQLIARILFHVADPAKSNAFWEHFKAKLADADKTLARTADSLCLLCGAIGYIDELFEDNDDEEGLTILRRLEDELC</sequence>
<keyword id="KW-0535">Nitrogen fixation</keyword>
<keyword id="KW-1185">Reference proteome</keyword>
<reference key="1">
    <citation type="journal article" date="2011" name="Stand. Genomic Sci.">
        <title>Complete genome sequence of Rhodospirillum rubrum type strain (S1).</title>
        <authorList>
            <person name="Munk A.C."/>
            <person name="Copeland A."/>
            <person name="Lucas S."/>
            <person name="Lapidus A."/>
            <person name="Del Rio T.G."/>
            <person name="Barry K."/>
            <person name="Detter J.C."/>
            <person name="Hammon N."/>
            <person name="Israni S."/>
            <person name="Pitluck S."/>
            <person name="Brettin T."/>
            <person name="Bruce D."/>
            <person name="Han C."/>
            <person name="Tapia R."/>
            <person name="Gilna P."/>
            <person name="Schmutz J."/>
            <person name="Larimer F."/>
            <person name="Land M."/>
            <person name="Kyrpides N.C."/>
            <person name="Mavromatis K."/>
            <person name="Richardson P."/>
            <person name="Rohde M."/>
            <person name="Goeker M."/>
            <person name="Klenk H.P."/>
            <person name="Zhang Y."/>
            <person name="Roberts G.P."/>
            <person name="Reslewic S."/>
            <person name="Schwartz D.C."/>
        </authorList>
    </citation>
    <scope>NUCLEOTIDE SEQUENCE [LARGE SCALE GENOMIC DNA]</scope>
    <source>
        <strain>ATCC 11170 / ATH 1.1.1 / DSM 467 / LMG 4362 / NCIMB 8255 / S1</strain>
    </source>
</reference>
<reference key="2">
    <citation type="journal article" date="2011" name="J. Bacteriol.">
        <title>Sustaining N2-dependent growth in the presence of CO.</title>
        <authorList>
            <person name="Kerby R.L."/>
            <person name="Roberts G.P."/>
        </authorList>
    </citation>
    <scope>FUNCTION IN N2-FIXATION</scope>
    <scope>INDUCTION</scope>
    <scope>DISRUPTION PHENOTYPE</scope>
    <scope>GENE NAME</scope>
</reference>
<proteinExistence type="evidence at protein level"/>
<gene>
    <name type="primary">cowN</name>
    <name type="ordered locus">Rru_A3516</name>
</gene>
<evidence type="ECO:0000269" key="1">
    <source>
    </source>
</evidence>
<evidence type="ECO:0000305" key="2"/>
<protein>
    <recommendedName>
        <fullName>N(2)-fixation sustaining protein CowN</fullName>
    </recommendedName>
    <alternativeName>
        <fullName>CO weal-nitrogenase</fullName>
    </alternativeName>
</protein>
<accession>Q2RNI5</accession>
<feature type="chain" id="PRO_0000407273" description="N(2)-fixation sustaining protein CowN">
    <location>
        <begin position="1"/>
        <end position="101"/>
    </location>
</feature>
<comment type="function">
    <text evidence="1">Is required to sustain N(2)-dependent growth in the presence of low levels of carbon monoxide (CO). Probably acts by protecting the N(2) fixation ability of the nitrogenase complex, which is inactivated in the presence of CO. Is not required for CO-dependent growth.</text>
</comment>
<comment type="induction">
    <text evidence="1">Up-regulated by RcoM in the presence of CO. Its expression is enhanced in the presence of a poor nitrogen source, like glutamate, that allows nif derepression.</text>
</comment>
<comment type="disruption phenotype">
    <text evidence="1">Strains lacking this gene are not able to grow with N(2) as a nitrogen source in the presence of CO.</text>
</comment>
<comment type="similarity">
    <text evidence="2">Belongs to the CowN family.</text>
</comment>
<dbReference type="EMBL" id="CP000230">
    <property type="protein sequence ID" value="ABC24310.1"/>
    <property type="molecule type" value="Genomic_DNA"/>
</dbReference>
<dbReference type="RefSeq" id="WP_011391263.1">
    <property type="nucleotide sequence ID" value="NC_007643.1"/>
</dbReference>
<dbReference type="RefSeq" id="YP_428597.1">
    <property type="nucleotide sequence ID" value="NC_007643.1"/>
</dbReference>
<dbReference type="STRING" id="269796.Rru_A3516"/>
<dbReference type="EnsemblBacteria" id="ABC24310">
    <property type="protein sequence ID" value="ABC24310"/>
    <property type="gene ID" value="Rru_A3516"/>
</dbReference>
<dbReference type="KEGG" id="rru:Rru_A3516"/>
<dbReference type="PATRIC" id="fig|269796.9.peg.3633"/>
<dbReference type="eggNOG" id="ENOG5032SZ8">
    <property type="taxonomic scope" value="Bacteria"/>
</dbReference>
<dbReference type="HOGENOM" id="CLU_149349_0_0_5"/>
<dbReference type="PhylomeDB" id="Q2RNI5"/>
<dbReference type="Proteomes" id="UP000001929">
    <property type="component" value="Chromosome"/>
</dbReference>
<dbReference type="GO" id="GO:0071245">
    <property type="term" value="P:cellular response to carbon monoxide"/>
    <property type="evidence" value="ECO:0000314"/>
    <property type="project" value="UniProtKB"/>
</dbReference>
<dbReference type="GO" id="GO:0009399">
    <property type="term" value="P:nitrogen fixation"/>
    <property type="evidence" value="ECO:0000315"/>
    <property type="project" value="UniProtKB"/>
</dbReference>
<dbReference type="HAMAP" id="MF_02117">
    <property type="entry name" value="CowN"/>
    <property type="match status" value="1"/>
</dbReference>
<dbReference type="InterPro" id="IPR024899">
    <property type="entry name" value="CowN"/>
</dbReference>
<dbReference type="NCBIfam" id="NF033689">
    <property type="entry name" value="N2Fix_CO_CowN"/>
    <property type="match status" value="1"/>
</dbReference>
<dbReference type="Pfam" id="PF20543">
    <property type="entry name" value="CowN"/>
    <property type="match status" value="1"/>
</dbReference>